<comment type="subunit">
    <text evidence="1">Homohexamer. Assembles into a hexameric ring structure.</text>
</comment>
<comment type="similarity">
    <text evidence="1">Belongs to the AAA ATPase family.</text>
</comment>
<comment type="sequence caution" evidence="3">
    <conflict type="erroneous initiation">
        <sequence resource="EMBL-CDS" id="ACR17667"/>
    </conflict>
    <text>Extended N-terminus.</text>
</comment>
<dbReference type="EMBL" id="CP001620">
    <property type="protein sequence ID" value="ACR17667.1"/>
    <property type="status" value="ALT_INIT"/>
    <property type="molecule type" value="Genomic_DNA"/>
</dbReference>
<dbReference type="RefSeq" id="WP_041628810.1">
    <property type="nucleotide sequence ID" value="NC_012704.1"/>
</dbReference>
<dbReference type="SMR" id="C4LIL2"/>
<dbReference type="STRING" id="645127.ckrop_0913"/>
<dbReference type="KEGG" id="ckp:ckrop_0913"/>
<dbReference type="eggNOG" id="COG1222">
    <property type="taxonomic scope" value="Bacteria"/>
</dbReference>
<dbReference type="HOGENOM" id="CLU_036054_0_0_11"/>
<dbReference type="OrthoDB" id="9809379at2"/>
<dbReference type="Proteomes" id="UP000001473">
    <property type="component" value="Chromosome"/>
</dbReference>
<dbReference type="GO" id="GO:0000502">
    <property type="term" value="C:proteasome complex"/>
    <property type="evidence" value="ECO:0007669"/>
    <property type="project" value="InterPro"/>
</dbReference>
<dbReference type="GO" id="GO:0005524">
    <property type="term" value="F:ATP binding"/>
    <property type="evidence" value="ECO:0007669"/>
    <property type="project" value="UniProtKB-UniRule"/>
</dbReference>
<dbReference type="GO" id="GO:0016887">
    <property type="term" value="F:ATP hydrolysis activity"/>
    <property type="evidence" value="ECO:0007669"/>
    <property type="project" value="UniProtKB-UniRule"/>
</dbReference>
<dbReference type="GO" id="GO:0019941">
    <property type="term" value="P:modification-dependent protein catabolic process"/>
    <property type="evidence" value="ECO:0007669"/>
    <property type="project" value="InterPro"/>
</dbReference>
<dbReference type="GO" id="GO:0010498">
    <property type="term" value="P:proteasomal protein catabolic process"/>
    <property type="evidence" value="ECO:0007669"/>
    <property type="project" value="InterPro"/>
</dbReference>
<dbReference type="FunFam" id="3.40.50.300:FF:001025">
    <property type="entry name" value="ATPase family, AAA domain-containing 2B"/>
    <property type="match status" value="1"/>
</dbReference>
<dbReference type="Gene3D" id="1.10.8.60">
    <property type="match status" value="1"/>
</dbReference>
<dbReference type="Gene3D" id="1.20.5.170">
    <property type="match status" value="1"/>
</dbReference>
<dbReference type="Gene3D" id="2.40.50.140">
    <property type="entry name" value="Nucleic acid-binding proteins"/>
    <property type="match status" value="2"/>
</dbReference>
<dbReference type="Gene3D" id="3.40.50.300">
    <property type="entry name" value="P-loop containing nucleotide triphosphate hydrolases"/>
    <property type="match status" value="1"/>
</dbReference>
<dbReference type="HAMAP" id="MF_02112">
    <property type="entry name" value="ARC_ATPase"/>
    <property type="match status" value="1"/>
</dbReference>
<dbReference type="InterPro" id="IPR003593">
    <property type="entry name" value="AAA+_ATPase"/>
</dbReference>
<dbReference type="InterPro" id="IPR050168">
    <property type="entry name" value="AAA_ATPase_domain"/>
</dbReference>
<dbReference type="InterPro" id="IPR003959">
    <property type="entry name" value="ATPase_AAA_core"/>
</dbReference>
<dbReference type="InterPro" id="IPR003960">
    <property type="entry name" value="ATPase_AAA_CS"/>
</dbReference>
<dbReference type="InterPro" id="IPR012340">
    <property type="entry name" value="NA-bd_OB-fold"/>
</dbReference>
<dbReference type="InterPro" id="IPR027417">
    <property type="entry name" value="P-loop_NTPase"/>
</dbReference>
<dbReference type="InterPro" id="IPR032501">
    <property type="entry name" value="Prot_ATP_ID_OB_2nd"/>
</dbReference>
<dbReference type="InterPro" id="IPR041626">
    <property type="entry name" value="Prot_ATP_ID_OB_N"/>
</dbReference>
<dbReference type="InterPro" id="IPR022482">
    <property type="entry name" value="Proteasome_ATPase"/>
</dbReference>
<dbReference type="NCBIfam" id="TIGR03689">
    <property type="entry name" value="pup_AAA"/>
    <property type="match status" value="1"/>
</dbReference>
<dbReference type="PANTHER" id="PTHR23077">
    <property type="entry name" value="AAA-FAMILY ATPASE"/>
    <property type="match status" value="1"/>
</dbReference>
<dbReference type="PANTHER" id="PTHR23077:SF144">
    <property type="entry name" value="PROTEASOME-ASSOCIATED ATPASE"/>
    <property type="match status" value="1"/>
</dbReference>
<dbReference type="Pfam" id="PF00004">
    <property type="entry name" value="AAA"/>
    <property type="match status" value="1"/>
</dbReference>
<dbReference type="Pfam" id="PF16450">
    <property type="entry name" value="Prot_ATP_ID_OB_C"/>
    <property type="match status" value="1"/>
</dbReference>
<dbReference type="Pfam" id="PF17758">
    <property type="entry name" value="Prot_ATP_ID_OB_N"/>
    <property type="match status" value="1"/>
</dbReference>
<dbReference type="SMART" id="SM00382">
    <property type="entry name" value="AAA"/>
    <property type="match status" value="1"/>
</dbReference>
<dbReference type="SUPFAM" id="SSF52540">
    <property type="entry name" value="P-loop containing nucleoside triphosphate hydrolases"/>
    <property type="match status" value="1"/>
</dbReference>
<dbReference type="PROSITE" id="PS00674">
    <property type="entry name" value="AAA"/>
    <property type="match status" value="1"/>
</dbReference>
<keyword id="KW-0067">ATP-binding</keyword>
<keyword id="KW-0175">Coiled coil</keyword>
<keyword id="KW-0547">Nucleotide-binding</keyword>
<keyword id="KW-1185">Reference proteome</keyword>
<sequence>MTTASQQTSSHSTASSTSRKGNNNDATPSLKELQLANRTLGTRNAKLVEMLKASRDKLDALNEQIRALSDPPSTYGTLLELNPGGHSAEVFTSNRRMRLVVAPGVDTSQLTPGALVRLGEGQEVVEHCGFSDFGDIAVVKEFLPGGSRVVVADTMGDLRVLKIAAPLYELWSQKNVGAGDQVLVDYRAGYAFESIPKADVENLILEEIPEVSYEDIGGLHNQIEMIHDAVELPFTHPDLYRKFDLQPPKGVLLYGPPGCGKTLIAKAVAHSLAEKMGSGGESYFLNIKGPELLNKFVGETERQIRQIFDRARSIAEDGRPVIVFFDEMDAIFRTRGSGISSDLENTVVPQLLSEIDGVEDLRNVIVIGASNREEMIDPAILRPGRLDVKIRVERPDEKSAREIAELYLVDTLPLDPALVEETGDRHAAVAALIDELSSRMYAQHSDNEFVELTFVDGSREVLYYRDFASGAMIANIVDRAKKNALKRALASGQPDNHGVSLEDVRTAVDQEFAENDDLPNTANPDEWARISGRTGQRVTEVTVAHHNRKTTTETEATEPEGTDSGKGHTDAS</sequence>
<feature type="chain" id="PRO_0000396980" description="AAA ATPase forming ring-shaped complexes">
    <location>
        <begin position="1"/>
        <end position="572"/>
    </location>
</feature>
<feature type="region of interest" description="Disordered" evidence="2">
    <location>
        <begin position="1"/>
        <end position="30"/>
    </location>
</feature>
<feature type="region of interest" description="Disordered" evidence="2">
    <location>
        <begin position="543"/>
        <end position="572"/>
    </location>
</feature>
<feature type="coiled-coil region" evidence="1">
    <location>
        <begin position="42"/>
        <end position="70"/>
    </location>
</feature>
<feature type="compositionally biased region" description="Low complexity" evidence="2">
    <location>
        <begin position="1"/>
        <end position="18"/>
    </location>
</feature>
<feature type="compositionally biased region" description="Basic and acidic residues" evidence="2">
    <location>
        <begin position="563"/>
        <end position="572"/>
    </location>
</feature>
<feature type="binding site" evidence="1">
    <location>
        <begin position="258"/>
        <end position="263"/>
    </location>
    <ligand>
        <name>ATP</name>
        <dbReference type="ChEBI" id="CHEBI:30616"/>
    </ligand>
</feature>
<protein>
    <recommendedName>
        <fullName evidence="1">AAA ATPase forming ring-shaped complexes</fullName>
        <shortName evidence="1">ARC</shortName>
    </recommendedName>
</protein>
<reference key="1">
    <citation type="journal article" date="2008" name="J. Biotechnol.">
        <title>Ultrafast pyrosequencing of Corynebacterium kroppenstedtii DSM44385 revealed insights into the physiology of a lipophilic corynebacterium that lacks mycolic acids.</title>
        <authorList>
            <person name="Tauch A."/>
            <person name="Schneider J."/>
            <person name="Szczepanowski R."/>
            <person name="Tilker A."/>
            <person name="Viehoever P."/>
            <person name="Gartemann K.-H."/>
            <person name="Arnold W."/>
            <person name="Blom J."/>
            <person name="Brinkrolf K."/>
            <person name="Brune I."/>
            <person name="Goetker S."/>
            <person name="Weisshaar B."/>
            <person name="Goesmann A."/>
            <person name="Droege M."/>
            <person name="Puehler A."/>
        </authorList>
    </citation>
    <scope>NUCLEOTIDE SEQUENCE [LARGE SCALE GENOMIC DNA]</scope>
    <source>
        <strain>DSM 44385 / JCM 11950 / CIP 105744 / CCUG 35717</strain>
    </source>
</reference>
<gene>
    <name evidence="1" type="primary">arc</name>
    <name type="ordered locus">ckrop_0913</name>
</gene>
<accession>C4LIL2</accession>
<name>ARC_CORK4</name>
<organism>
    <name type="scientific">Corynebacterium kroppenstedtii (strain DSM 44385 / JCM 11950 / CIP 105744 / CCUG 35717)</name>
    <dbReference type="NCBI Taxonomy" id="645127"/>
    <lineage>
        <taxon>Bacteria</taxon>
        <taxon>Bacillati</taxon>
        <taxon>Actinomycetota</taxon>
        <taxon>Actinomycetes</taxon>
        <taxon>Mycobacteriales</taxon>
        <taxon>Corynebacteriaceae</taxon>
        <taxon>Corynebacterium</taxon>
    </lineage>
</organism>
<evidence type="ECO:0000255" key="1">
    <source>
        <dbReference type="HAMAP-Rule" id="MF_02112"/>
    </source>
</evidence>
<evidence type="ECO:0000256" key="2">
    <source>
        <dbReference type="SAM" id="MobiDB-lite"/>
    </source>
</evidence>
<evidence type="ECO:0000305" key="3"/>
<proteinExistence type="inferred from homology"/>